<accession>Q83BB6</accession>
<accession>Q9KH26</accession>
<comment type="function">
    <text evidence="1">Sigma factors are initiation factors that promote the attachment of RNA polymerase to specific initiation sites and are then released. This sigma factor is the primary sigma factor during exponential growth.</text>
</comment>
<comment type="subunit">
    <text evidence="1">Interacts transiently with the RNA polymerase catalytic core.</text>
</comment>
<comment type="subcellular location">
    <subcellularLocation>
        <location evidence="1">Cytoplasm</location>
    </subcellularLocation>
</comment>
<comment type="developmental stage">
    <text evidence="3">Found in both the large cell variant (LCV) and small cell variant (SCV) stage (at protein level). LCVs are more metabolically active than SCVs.</text>
</comment>
<comment type="similarity">
    <text evidence="1">Belongs to the sigma-70 factor family. RpoD/SigA subfamily.</text>
</comment>
<protein>
    <recommendedName>
        <fullName evidence="1">RNA polymerase sigma factor RpoD</fullName>
    </recommendedName>
    <alternativeName>
        <fullName evidence="1">Sigma-70</fullName>
    </alternativeName>
</protein>
<organism>
    <name type="scientific">Coxiella burnetii (strain RSA 493 / Nine Mile phase I)</name>
    <dbReference type="NCBI Taxonomy" id="227377"/>
    <lineage>
        <taxon>Bacteria</taxon>
        <taxon>Pseudomonadati</taxon>
        <taxon>Pseudomonadota</taxon>
        <taxon>Gammaproteobacteria</taxon>
        <taxon>Legionellales</taxon>
        <taxon>Coxiellaceae</taxon>
        <taxon>Coxiella</taxon>
    </lineage>
</organism>
<sequence length="698" mass="79553">MPSRKKKSSVTKTKKKTTGKKARVTAKAKPSVKSKLKTVKRAPAKPKSVTVAKTKSKKEKAKVVSQPLPKTAEKKPSAPPSETQQPKIGENAAESQRLGFGALLEEAKNKGYLVHEDLINLLPNDYADPSQMEGIIGRLTEMGIKVFEIPPDADSLLLEEDTQSDDDEINEDVAEVLATETRTTDPVRMYMREMGSVELLTREGEIVIAKRIEEGIRQVMGAVVQYPELIEKFIKEYDTIVATEGRLSDLLIGFFDEEESTASPVAPEARDKEAETSDEDDGGEGGSDEFGESGPDPLITQQHMEELKKLYGRYQNAIKRYGKKAPATLKHQKALAELFSTFKLSIKQFNRLTGQLRRMLRAARAQERLIMSYCVVKAKTPRKKFIASFPHNETNMKWLEQYKNENKEQAKRLEKYSKEIYRAQRNLAQLEEQNNLNIQEIKEINRRVAIGEAKSRRAKKEMIEANLRLVISIAKKYTNRGLQFLDLIQEGNIGLMKAVDKFEYRRGYKFSTYATWWIRQAITRSIADQARTIRIPVHMIETINKLNRISRQILQETGIEATPEELGRRMDMPEEKVRKVLKIAKEPISMETPIGEDEDSNLGDFIEDINMESPVDFATSAGLMEATREILSTLTPREAKVLRMRFGIDMNTDHTLEEVGKQFDVTRERIRQIEAKALRKLRHPSRAEKLHSFIEVEE</sequence>
<reference key="1">
    <citation type="journal article" date="2003" name="Proc. Natl. Acad. Sci. U.S.A.">
        <title>Complete genome sequence of the Q-fever pathogen, Coxiella burnetii.</title>
        <authorList>
            <person name="Seshadri R."/>
            <person name="Paulsen I.T."/>
            <person name="Eisen J.A."/>
            <person name="Read T.D."/>
            <person name="Nelson K.E."/>
            <person name="Nelson W.C."/>
            <person name="Ward N.L."/>
            <person name="Tettelin H."/>
            <person name="Davidsen T.M."/>
            <person name="Beanan M.J."/>
            <person name="DeBoy R.T."/>
            <person name="Daugherty S.C."/>
            <person name="Brinkac L.M."/>
            <person name="Madupu R."/>
            <person name="Dodson R.J."/>
            <person name="Khouri H.M."/>
            <person name="Lee K.H."/>
            <person name="Carty H.A."/>
            <person name="Scanlan D."/>
            <person name="Heinzen R.A."/>
            <person name="Thompson H.A."/>
            <person name="Samuel J.E."/>
            <person name="Fraser C.M."/>
            <person name="Heidelberg J.F."/>
        </authorList>
    </citation>
    <scope>NUCLEOTIDE SEQUENCE [LARGE SCALE GENOMIC DNA]</scope>
    <source>
        <strain>RSA 493 / Nine Mile phase I</strain>
    </source>
</reference>
<reference key="2">
    <citation type="journal article" date="2001" name="Infect. Immun.">
        <title>Characterization of a stress-induced alternate sigma factor, RpoS, of Coxiella burnetii and its expression during the development cycle.</title>
        <authorList>
            <person name="Seshadri R."/>
            <person name="Samuel J.E."/>
        </authorList>
    </citation>
    <scope>NUCLEOTIDE SEQUENCE [GENOMIC DNA] OF 289-698</scope>
    <scope>DEVELOPMENTAL STAGE</scope>
    <source>
        <strain>RSA 493 / Nine Mile phase I</strain>
    </source>
</reference>
<keyword id="KW-0963">Cytoplasm</keyword>
<keyword id="KW-0238">DNA-binding</keyword>
<keyword id="KW-1185">Reference proteome</keyword>
<keyword id="KW-0731">Sigma factor</keyword>
<keyword id="KW-0804">Transcription</keyword>
<keyword id="KW-0805">Transcription regulation</keyword>
<feature type="chain" id="PRO_0000318557" description="RNA polymerase sigma factor RpoD">
    <location>
        <begin position="1"/>
        <end position="698"/>
    </location>
</feature>
<feature type="DNA-binding region" description="H-T-H motif" evidence="1">
    <location>
        <begin position="656"/>
        <end position="675"/>
    </location>
</feature>
<feature type="region of interest" description="Disordered" evidence="2">
    <location>
        <begin position="1"/>
        <end position="88"/>
    </location>
</feature>
<feature type="region of interest" description="Disordered" evidence="2">
    <location>
        <begin position="259"/>
        <end position="298"/>
    </location>
</feature>
<feature type="region of interest" description="Sigma-70 factor domain-2" evidence="1">
    <location>
        <begin position="462"/>
        <end position="532"/>
    </location>
</feature>
<feature type="region of interest" description="Sigma-70 factor domain-3" evidence="1">
    <location>
        <begin position="541"/>
        <end position="617"/>
    </location>
</feature>
<feature type="region of interest" description="Sigma-70 factor domain-4" evidence="1">
    <location>
        <begin position="630"/>
        <end position="683"/>
    </location>
</feature>
<feature type="short sequence motif" description="Interaction with polymerase core subunit RpoC">
    <location>
        <begin position="486"/>
        <end position="489"/>
    </location>
</feature>
<feature type="compositionally biased region" description="Basic residues" evidence="2">
    <location>
        <begin position="1"/>
        <end position="44"/>
    </location>
</feature>
<feature type="compositionally biased region" description="Acidic residues" evidence="2">
    <location>
        <begin position="276"/>
        <end position="291"/>
    </location>
</feature>
<feature type="sequence conflict" description="In Ref. 2; AAF82776." evidence="4" ref="2">
    <original>EILSTLTPREAK</original>
    <variation>RNFVYAYPARSQ</variation>
    <location>
        <begin position="629"/>
        <end position="640"/>
    </location>
</feature>
<feature type="sequence conflict" description="In Ref. 2; AAF82776." evidence="4" ref="2">
    <original>KQF</original>
    <variation>NNS</variation>
    <location>
        <begin position="661"/>
        <end position="663"/>
    </location>
</feature>
<name>RPOD_COXBU</name>
<dbReference type="EMBL" id="AE016828">
    <property type="protein sequence ID" value="AAO91093.1"/>
    <property type="molecule type" value="Genomic_DNA"/>
</dbReference>
<dbReference type="EMBL" id="AF273254">
    <property type="protein sequence ID" value="AAF82776.1"/>
    <property type="molecule type" value="Genomic_DNA"/>
</dbReference>
<dbReference type="RefSeq" id="NP_820579.1">
    <property type="nucleotide sequence ID" value="NC_002971.4"/>
</dbReference>
<dbReference type="RefSeq" id="WP_010958322.1">
    <property type="nucleotide sequence ID" value="NC_002971.4"/>
</dbReference>
<dbReference type="SMR" id="Q83BB6"/>
<dbReference type="STRING" id="227377.CBU_1596"/>
<dbReference type="EnsemblBacteria" id="AAO91093">
    <property type="protein sequence ID" value="AAO91093"/>
    <property type="gene ID" value="CBU_1596"/>
</dbReference>
<dbReference type="GeneID" id="1209506"/>
<dbReference type="KEGG" id="cbu:CBU_1596"/>
<dbReference type="PATRIC" id="fig|227377.7.peg.1598"/>
<dbReference type="eggNOG" id="COG0568">
    <property type="taxonomic scope" value="Bacteria"/>
</dbReference>
<dbReference type="HOGENOM" id="CLU_014793_7_2_6"/>
<dbReference type="OrthoDB" id="9809557at2"/>
<dbReference type="Proteomes" id="UP000002671">
    <property type="component" value="Chromosome"/>
</dbReference>
<dbReference type="GO" id="GO:0005737">
    <property type="term" value="C:cytoplasm"/>
    <property type="evidence" value="ECO:0007669"/>
    <property type="project" value="UniProtKB-SubCell"/>
</dbReference>
<dbReference type="GO" id="GO:0003677">
    <property type="term" value="F:DNA binding"/>
    <property type="evidence" value="ECO:0007669"/>
    <property type="project" value="UniProtKB-UniRule"/>
</dbReference>
<dbReference type="GO" id="GO:0016987">
    <property type="term" value="F:sigma factor activity"/>
    <property type="evidence" value="ECO:0007669"/>
    <property type="project" value="UniProtKB-UniRule"/>
</dbReference>
<dbReference type="GO" id="GO:0006352">
    <property type="term" value="P:DNA-templated transcription initiation"/>
    <property type="evidence" value="ECO:0007669"/>
    <property type="project" value="UniProtKB-UniRule"/>
</dbReference>
<dbReference type="CDD" id="cd06171">
    <property type="entry name" value="Sigma70_r4"/>
    <property type="match status" value="1"/>
</dbReference>
<dbReference type="FunFam" id="1.10.601.10:FF:000002">
    <property type="entry name" value="RNA polymerase sigma factor RpoD"/>
    <property type="match status" value="1"/>
</dbReference>
<dbReference type="FunFam" id="1.10.10.10:FF:000002">
    <property type="entry name" value="RNA polymerase sigma factor SigA"/>
    <property type="match status" value="1"/>
</dbReference>
<dbReference type="FunFam" id="1.10.10.10:FF:000004">
    <property type="entry name" value="RNA polymerase sigma factor SigA"/>
    <property type="match status" value="1"/>
</dbReference>
<dbReference type="Gene3D" id="1.10.601.10">
    <property type="entry name" value="RNA Polymerase Primary Sigma Factor"/>
    <property type="match status" value="1"/>
</dbReference>
<dbReference type="Gene3D" id="1.10.220.120">
    <property type="entry name" value="Sigma-70 factor, region 1.1"/>
    <property type="match status" value="1"/>
</dbReference>
<dbReference type="Gene3D" id="1.10.10.10">
    <property type="entry name" value="Winged helix-like DNA-binding domain superfamily/Winged helix DNA-binding domain"/>
    <property type="match status" value="2"/>
</dbReference>
<dbReference type="HAMAP" id="MF_00963">
    <property type="entry name" value="Sigma70_RpoD_SigA"/>
    <property type="match status" value="1"/>
</dbReference>
<dbReference type="InterPro" id="IPR014284">
    <property type="entry name" value="RNA_pol_sigma-70_dom"/>
</dbReference>
<dbReference type="InterPro" id="IPR000943">
    <property type="entry name" value="RNA_pol_sigma70"/>
</dbReference>
<dbReference type="InterPro" id="IPR009042">
    <property type="entry name" value="RNA_pol_sigma70_r1_2"/>
</dbReference>
<dbReference type="InterPro" id="IPR007627">
    <property type="entry name" value="RNA_pol_sigma70_r2"/>
</dbReference>
<dbReference type="InterPro" id="IPR007624">
    <property type="entry name" value="RNA_pol_sigma70_r3"/>
</dbReference>
<dbReference type="InterPro" id="IPR007630">
    <property type="entry name" value="RNA_pol_sigma70_r4"/>
</dbReference>
<dbReference type="InterPro" id="IPR007631">
    <property type="entry name" value="RNA_pol_sigma_70_non-ess"/>
</dbReference>
<dbReference type="InterPro" id="IPR007127">
    <property type="entry name" value="RNA_pol_sigma_70_r1_1"/>
</dbReference>
<dbReference type="InterPro" id="IPR042189">
    <property type="entry name" value="RNA_pol_sigma_70_r1_1_sf"/>
</dbReference>
<dbReference type="InterPro" id="IPR013325">
    <property type="entry name" value="RNA_pol_sigma_r2"/>
</dbReference>
<dbReference type="InterPro" id="IPR013324">
    <property type="entry name" value="RNA_pol_sigma_r3/r4-like"/>
</dbReference>
<dbReference type="InterPro" id="IPR012760">
    <property type="entry name" value="RNA_pol_sigma_RpoD_C"/>
</dbReference>
<dbReference type="InterPro" id="IPR050239">
    <property type="entry name" value="Sigma-70_RNA_pol_init_factors"/>
</dbReference>
<dbReference type="InterPro" id="IPR028630">
    <property type="entry name" value="Sigma70_RpoD"/>
</dbReference>
<dbReference type="InterPro" id="IPR036388">
    <property type="entry name" value="WH-like_DNA-bd_sf"/>
</dbReference>
<dbReference type="NCBIfam" id="NF004208">
    <property type="entry name" value="PRK05658.1"/>
    <property type="match status" value="1"/>
</dbReference>
<dbReference type="NCBIfam" id="TIGR02393">
    <property type="entry name" value="RpoD_Cterm"/>
    <property type="match status" value="1"/>
</dbReference>
<dbReference type="NCBIfam" id="TIGR02937">
    <property type="entry name" value="sigma70-ECF"/>
    <property type="match status" value="1"/>
</dbReference>
<dbReference type="PANTHER" id="PTHR30603">
    <property type="entry name" value="RNA POLYMERASE SIGMA FACTOR RPO"/>
    <property type="match status" value="1"/>
</dbReference>
<dbReference type="PANTHER" id="PTHR30603:SF60">
    <property type="entry name" value="RNA POLYMERASE SIGMA FACTOR RPOD"/>
    <property type="match status" value="1"/>
</dbReference>
<dbReference type="Pfam" id="PF04546">
    <property type="entry name" value="Sigma70_ner"/>
    <property type="match status" value="1"/>
</dbReference>
<dbReference type="Pfam" id="PF03979">
    <property type="entry name" value="Sigma70_r1_1"/>
    <property type="match status" value="1"/>
</dbReference>
<dbReference type="Pfam" id="PF00140">
    <property type="entry name" value="Sigma70_r1_2"/>
    <property type="match status" value="1"/>
</dbReference>
<dbReference type="Pfam" id="PF04542">
    <property type="entry name" value="Sigma70_r2"/>
    <property type="match status" value="1"/>
</dbReference>
<dbReference type="Pfam" id="PF04539">
    <property type="entry name" value="Sigma70_r3"/>
    <property type="match status" value="1"/>
</dbReference>
<dbReference type="Pfam" id="PF04545">
    <property type="entry name" value="Sigma70_r4"/>
    <property type="match status" value="1"/>
</dbReference>
<dbReference type="PRINTS" id="PR00046">
    <property type="entry name" value="SIGMA70FCT"/>
</dbReference>
<dbReference type="SUPFAM" id="SSF88946">
    <property type="entry name" value="Sigma2 domain of RNA polymerase sigma factors"/>
    <property type="match status" value="1"/>
</dbReference>
<dbReference type="SUPFAM" id="SSF88659">
    <property type="entry name" value="Sigma3 and sigma4 domains of RNA polymerase sigma factors"/>
    <property type="match status" value="2"/>
</dbReference>
<dbReference type="PROSITE" id="PS00715">
    <property type="entry name" value="SIGMA70_1"/>
    <property type="match status" value="1"/>
</dbReference>
<dbReference type="PROSITE" id="PS00716">
    <property type="entry name" value="SIGMA70_2"/>
    <property type="match status" value="1"/>
</dbReference>
<gene>
    <name evidence="1" type="primary">rpoD</name>
    <name type="ordered locus">CBU_1596</name>
</gene>
<evidence type="ECO:0000255" key="1">
    <source>
        <dbReference type="HAMAP-Rule" id="MF_00963"/>
    </source>
</evidence>
<evidence type="ECO:0000256" key="2">
    <source>
        <dbReference type="SAM" id="MobiDB-lite"/>
    </source>
</evidence>
<evidence type="ECO:0000269" key="3">
    <source>
    </source>
</evidence>
<evidence type="ECO:0000305" key="4"/>
<proteinExistence type="evidence at protein level"/>